<gene>
    <name evidence="1" type="primary">plsX</name>
    <name type="ordered locus">Gbem_3109</name>
</gene>
<protein>
    <recommendedName>
        <fullName evidence="1">Phosphate acyltransferase</fullName>
        <ecNumber evidence="1">2.3.1.274</ecNumber>
    </recommendedName>
    <alternativeName>
        <fullName evidence="1">Acyl-ACP phosphotransacylase</fullName>
    </alternativeName>
    <alternativeName>
        <fullName evidence="1">Acyl-[acyl-carrier-protein]--phosphate acyltransferase</fullName>
    </alternativeName>
    <alternativeName>
        <fullName evidence="1">Phosphate-acyl-ACP acyltransferase</fullName>
    </alternativeName>
</protein>
<sequence length="352" mass="37233">MRVAVDVMGGDNAPHVEVEGAVAAAREFGVPVTLVGDAEKVRAELARYDCKGLDIEVWHASEVVGMHDSASDAVRKKKDSSIRIAFELVKGGEAVAVVSAGNSGATMAAGMFVLKRMKGIDRAAIAQLFPTVSGKTLVLDVGGNVDCKPIHLVQFAVMGEVYARFVMGVDNPKVGLLSNGEEASKGNELTRETSALLREKPINYIGYVEGRDIFNGSVDVVVCDGFVGNVALKLSEGLAEAVGKMLKAEIKSSFLSQIGYLLSRKAFNNFKKTVDYAEYGGAPLLGINGVGMICHGGSNPKAIKNAIRFAHEYALKGVNGRMAEKLNESFPGDAREREGAPAPDAGTERVAS</sequence>
<proteinExistence type="inferred from homology"/>
<dbReference type="EC" id="2.3.1.274" evidence="1"/>
<dbReference type="EMBL" id="CP001124">
    <property type="protein sequence ID" value="ACH40111.1"/>
    <property type="molecule type" value="Genomic_DNA"/>
</dbReference>
<dbReference type="RefSeq" id="WP_012531544.1">
    <property type="nucleotide sequence ID" value="NC_011146.1"/>
</dbReference>
<dbReference type="SMR" id="B5E8U7"/>
<dbReference type="STRING" id="404380.Gbem_3109"/>
<dbReference type="KEGG" id="gbm:Gbem_3109"/>
<dbReference type="eggNOG" id="COG0416">
    <property type="taxonomic scope" value="Bacteria"/>
</dbReference>
<dbReference type="HOGENOM" id="CLU_039379_1_1_7"/>
<dbReference type="OrthoDB" id="9806408at2"/>
<dbReference type="UniPathway" id="UPA00085"/>
<dbReference type="Proteomes" id="UP000008825">
    <property type="component" value="Chromosome"/>
</dbReference>
<dbReference type="GO" id="GO:0005737">
    <property type="term" value="C:cytoplasm"/>
    <property type="evidence" value="ECO:0007669"/>
    <property type="project" value="UniProtKB-SubCell"/>
</dbReference>
<dbReference type="GO" id="GO:0043811">
    <property type="term" value="F:phosphate:acyl-[acyl carrier protein] acyltransferase activity"/>
    <property type="evidence" value="ECO:0007669"/>
    <property type="project" value="UniProtKB-UniRule"/>
</dbReference>
<dbReference type="GO" id="GO:0006633">
    <property type="term" value="P:fatty acid biosynthetic process"/>
    <property type="evidence" value="ECO:0007669"/>
    <property type="project" value="UniProtKB-UniRule"/>
</dbReference>
<dbReference type="GO" id="GO:0008654">
    <property type="term" value="P:phospholipid biosynthetic process"/>
    <property type="evidence" value="ECO:0007669"/>
    <property type="project" value="UniProtKB-KW"/>
</dbReference>
<dbReference type="Gene3D" id="3.40.718.10">
    <property type="entry name" value="Isopropylmalate Dehydrogenase"/>
    <property type="match status" value="1"/>
</dbReference>
<dbReference type="HAMAP" id="MF_00019">
    <property type="entry name" value="PlsX"/>
    <property type="match status" value="1"/>
</dbReference>
<dbReference type="InterPro" id="IPR003664">
    <property type="entry name" value="FA_synthesis"/>
</dbReference>
<dbReference type="InterPro" id="IPR012281">
    <property type="entry name" value="Phospholipid_synth_PlsX-like"/>
</dbReference>
<dbReference type="NCBIfam" id="TIGR00182">
    <property type="entry name" value="plsX"/>
    <property type="match status" value="1"/>
</dbReference>
<dbReference type="PANTHER" id="PTHR30100">
    <property type="entry name" value="FATTY ACID/PHOSPHOLIPID SYNTHESIS PROTEIN PLSX"/>
    <property type="match status" value="1"/>
</dbReference>
<dbReference type="PANTHER" id="PTHR30100:SF1">
    <property type="entry name" value="PHOSPHATE ACYLTRANSFERASE"/>
    <property type="match status" value="1"/>
</dbReference>
<dbReference type="Pfam" id="PF02504">
    <property type="entry name" value="FA_synthesis"/>
    <property type="match status" value="1"/>
</dbReference>
<dbReference type="PIRSF" id="PIRSF002465">
    <property type="entry name" value="Phsphlp_syn_PlsX"/>
    <property type="match status" value="1"/>
</dbReference>
<dbReference type="SUPFAM" id="SSF53659">
    <property type="entry name" value="Isocitrate/Isopropylmalate dehydrogenase-like"/>
    <property type="match status" value="1"/>
</dbReference>
<name>PLSX_CITBB</name>
<feature type="chain" id="PRO_1000089909" description="Phosphate acyltransferase">
    <location>
        <begin position="1"/>
        <end position="352"/>
    </location>
</feature>
<feature type="region of interest" description="Disordered" evidence="2">
    <location>
        <begin position="328"/>
        <end position="352"/>
    </location>
</feature>
<feature type="compositionally biased region" description="Basic and acidic residues" evidence="2">
    <location>
        <begin position="328"/>
        <end position="339"/>
    </location>
</feature>
<organism>
    <name type="scientific">Citrifermentans bemidjiense (strain ATCC BAA-1014 / DSM 16622 / JCM 12645 / Bem)</name>
    <name type="common">Geobacter bemidjiensis</name>
    <dbReference type="NCBI Taxonomy" id="404380"/>
    <lineage>
        <taxon>Bacteria</taxon>
        <taxon>Pseudomonadati</taxon>
        <taxon>Thermodesulfobacteriota</taxon>
        <taxon>Desulfuromonadia</taxon>
        <taxon>Geobacterales</taxon>
        <taxon>Geobacteraceae</taxon>
        <taxon>Citrifermentans</taxon>
    </lineage>
</organism>
<keyword id="KW-0963">Cytoplasm</keyword>
<keyword id="KW-0444">Lipid biosynthesis</keyword>
<keyword id="KW-0443">Lipid metabolism</keyword>
<keyword id="KW-0594">Phospholipid biosynthesis</keyword>
<keyword id="KW-1208">Phospholipid metabolism</keyword>
<keyword id="KW-1185">Reference proteome</keyword>
<keyword id="KW-0808">Transferase</keyword>
<comment type="function">
    <text evidence="1">Catalyzes the reversible formation of acyl-phosphate (acyl-PO(4)) from acyl-[acyl-carrier-protein] (acyl-ACP). This enzyme utilizes acyl-ACP as fatty acyl donor, but not acyl-CoA.</text>
</comment>
<comment type="catalytic activity">
    <reaction evidence="1">
        <text>a fatty acyl-[ACP] + phosphate = an acyl phosphate + holo-[ACP]</text>
        <dbReference type="Rhea" id="RHEA:42292"/>
        <dbReference type="Rhea" id="RHEA-COMP:9685"/>
        <dbReference type="Rhea" id="RHEA-COMP:14125"/>
        <dbReference type="ChEBI" id="CHEBI:43474"/>
        <dbReference type="ChEBI" id="CHEBI:59918"/>
        <dbReference type="ChEBI" id="CHEBI:64479"/>
        <dbReference type="ChEBI" id="CHEBI:138651"/>
        <dbReference type="EC" id="2.3.1.274"/>
    </reaction>
</comment>
<comment type="pathway">
    <text evidence="1">Lipid metabolism; phospholipid metabolism.</text>
</comment>
<comment type="subunit">
    <text evidence="1">Homodimer. Probably interacts with PlsY.</text>
</comment>
<comment type="subcellular location">
    <subcellularLocation>
        <location evidence="1">Cytoplasm</location>
    </subcellularLocation>
    <text evidence="1">Associated with the membrane possibly through PlsY.</text>
</comment>
<comment type="similarity">
    <text evidence="1">Belongs to the PlsX family.</text>
</comment>
<reference key="1">
    <citation type="submission" date="2008-07" db="EMBL/GenBank/DDBJ databases">
        <title>Complete sequence of Geobacter bemidjiensis BEM.</title>
        <authorList>
            <consortium name="US DOE Joint Genome Institute"/>
            <person name="Lucas S."/>
            <person name="Copeland A."/>
            <person name="Lapidus A."/>
            <person name="Glavina del Rio T."/>
            <person name="Dalin E."/>
            <person name="Tice H."/>
            <person name="Bruce D."/>
            <person name="Goodwin L."/>
            <person name="Pitluck S."/>
            <person name="Kiss H."/>
            <person name="Brettin T."/>
            <person name="Detter J.C."/>
            <person name="Han C."/>
            <person name="Kuske C.R."/>
            <person name="Schmutz J."/>
            <person name="Larimer F."/>
            <person name="Land M."/>
            <person name="Hauser L."/>
            <person name="Kyrpides N."/>
            <person name="Lykidis A."/>
            <person name="Lovley D."/>
            <person name="Richardson P."/>
        </authorList>
    </citation>
    <scope>NUCLEOTIDE SEQUENCE [LARGE SCALE GENOMIC DNA]</scope>
    <source>
        <strain>ATCC BAA-1014 / DSM 16622 / JCM 12645 / Bem</strain>
    </source>
</reference>
<evidence type="ECO:0000255" key="1">
    <source>
        <dbReference type="HAMAP-Rule" id="MF_00019"/>
    </source>
</evidence>
<evidence type="ECO:0000256" key="2">
    <source>
        <dbReference type="SAM" id="MobiDB-lite"/>
    </source>
</evidence>
<accession>B5E8U7</accession>